<sequence length="178" mass="19071">MTAPQEPVDPIQDAGVEAPDLQAEIDALRAELAAAQAQAQAHQEQALRAMAEAENVRRRAQEDVSKARKFGIESFAESLVPVKDSLEAALAQPEQTAQALREGVEVTLKQLNGAFERNMLKDIAPAQGDKFDPHLHQAISSVPAPQPANTVVQLLQKGYVIADRTLRPALVVVSAGQG</sequence>
<dbReference type="EMBL" id="AM167904">
    <property type="protein sequence ID" value="CAJ50329.1"/>
    <property type="molecule type" value="Genomic_DNA"/>
</dbReference>
<dbReference type="RefSeq" id="WP_012418360.1">
    <property type="nucleotide sequence ID" value="NC_010645.1"/>
</dbReference>
<dbReference type="SMR" id="Q2KW99"/>
<dbReference type="STRING" id="360910.BAV2718"/>
<dbReference type="GeneID" id="92934098"/>
<dbReference type="KEGG" id="bav:BAV2718"/>
<dbReference type="eggNOG" id="COG0576">
    <property type="taxonomic scope" value="Bacteria"/>
</dbReference>
<dbReference type="HOGENOM" id="CLU_057217_6_1_4"/>
<dbReference type="OrthoDB" id="9789811at2"/>
<dbReference type="Proteomes" id="UP000001977">
    <property type="component" value="Chromosome"/>
</dbReference>
<dbReference type="GO" id="GO:0005829">
    <property type="term" value="C:cytosol"/>
    <property type="evidence" value="ECO:0007669"/>
    <property type="project" value="TreeGrafter"/>
</dbReference>
<dbReference type="GO" id="GO:0000774">
    <property type="term" value="F:adenyl-nucleotide exchange factor activity"/>
    <property type="evidence" value="ECO:0007669"/>
    <property type="project" value="InterPro"/>
</dbReference>
<dbReference type="GO" id="GO:0042803">
    <property type="term" value="F:protein homodimerization activity"/>
    <property type="evidence" value="ECO:0007669"/>
    <property type="project" value="InterPro"/>
</dbReference>
<dbReference type="GO" id="GO:0051087">
    <property type="term" value="F:protein-folding chaperone binding"/>
    <property type="evidence" value="ECO:0007669"/>
    <property type="project" value="InterPro"/>
</dbReference>
<dbReference type="GO" id="GO:0051082">
    <property type="term" value="F:unfolded protein binding"/>
    <property type="evidence" value="ECO:0007669"/>
    <property type="project" value="TreeGrafter"/>
</dbReference>
<dbReference type="GO" id="GO:0006457">
    <property type="term" value="P:protein folding"/>
    <property type="evidence" value="ECO:0007669"/>
    <property type="project" value="InterPro"/>
</dbReference>
<dbReference type="CDD" id="cd00446">
    <property type="entry name" value="GrpE"/>
    <property type="match status" value="1"/>
</dbReference>
<dbReference type="Gene3D" id="3.90.20.20">
    <property type="match status" value="1"/>
</dbReference>
<dbReference type="Gene3D" id="2.30.22.10">
    <property type="entry name" value="Head domain of nucleotide exchange factor GrpE"/>
    <property type="match status" value="1"/>
</dbReference>
<dbReference type="HAMAP" id="MF_01151">
    <property type="entry name" value="GrpE"/>
    <property type="match status" value="1"/>
</dbReference>
<dbReference type="InterPro" id="IPR000740">
    <property type="entry name" value="GrpE"/>
</dbReference>
<dbReference type="InterPro" id="IPR013805">
    <property type="entry name" value="GrpE_coiled_coil"/>
</dbReference>
<dbReference type="InterPro" id="IPR009012">
    <property type="entry name" value="GrpE_head"/>
</dbReference>
<dbReference type="NCBIfam" id="NF010737">
    <property type="entry name" value="PRK14139.1"/>
    <property type="match status" value="1"/>
</dbReference>
<dbReference type="PANTHER" id="PTHR21237">
    <property type="entry name" value="GRPE PROTEIN"/>
    <property type="match status" value="1"/>
</dbReference>
<dbReference type="PANTHER" id="PTHR21237:SF23">
    <property type="entry name" value="GRPE PROTEIN HOMOLOG, MITOCHONDRIAL"/>
    <property type="match status" value="1"/>
</dbReference>
<dbReference type="Pfam" id="PF01025">
    <property type="entry name" value="GrpE"/>
    <property type="match status" value="1"/>
</dbReference>
<dbReference type="PRINTS" id="PR00773">
    <property type="entry name" value="GRPEPROTEIN"/>
</dbReference>
<dbReference type="SUPFAM" id="SSF58014">
    <property type="entry name" value="Coiled-coil domain of nucleotide exchange factor GrpE"/>
    <property type="match status" value="1"/>
</dbReference>
<dbReference type="SUPFAM" id="SSF51064">
    <property type="entry name" value="Head domain of nucleotide exchange factor GrpE"/>
    <property type="match status" value="1"/>
</dbReference>
<dbReference type="PROSITE" id="PS01071">
    <property type="entry name" value="GRPE"/>
    <property type="match status" value="1"/>
</dbReference>
<feature type="chain" id="PRO_1000137543" description="Protein GrpE">
    <location>
        <begin position="1"/>
        <end position="178"/>
    </location>
</feature>
<evidence type="ECO:0000255" key="1">
    <source>
        <dbReference type="HAMAP-Rule" id="MF_01151"/>
    </source>
</evidence>
<protein>
    <recommendedName>
        <fullName evidence="1">Protein GrpE</fullName>
    </recommendedName>
    <alternativeName>
        <fullName evidence="1">HSP-70 cofactor</fullName>
    </alternativeName>
</protein>
<accession>Q2KW99</accession>
<organism>
    <name type="scientific">Bordetella avium (strain 197N)</name>
    <dbReference type="NCBI Taxonomy" id="360910"/>
    <lineage>
        <taxon>Bacteria</taxon>
        <taxon>Pseudomonadati</taxon>
        <taxon>Pseudomonadota</taxon>
        <taxon>Betaproteobacteria</taxon>
        <taxon>Burkholderiales</taxon>
        <taxon>Alcaligenaceae</taxon>
        <taxon>Bordetella</taxon>
    </lineage>
</organism>
<proteinExistence type="inferred from homology"/>
<gene>
    <name evidence="1" type="primary">grpE</name>
    <name type="ordered locus">BAV2718</name>
</gene>
<name>GRPE_BORA1</name>
<keyword id="KW-0143">Chaperone</keyword>
<keyword id="KW-0963">Cytoplasm</keyword>
<keyword id="KW-1185">Reference proteome</keyword>
<keyword id="KW-0346">Stress response</keyword>
<comment type="function">
    <text evidence="1">Participates actively in the response to hyperosmotic and heat shock by preventing the aggregation of stress-denatured proteins, in association with DnaK and GrpE. It is the nucleotide exchange factor for DnaK and may function as a thermosensor. Unfolded proteins bind initially to DnaJ; upon interaction with the DnaJ-bound protein, DnaK hydrolyzes its bound ATP, resulting in the formation of a stable complex. GrpE releases ADP from DnaK; ATP binding to DnaK triggers the release of the substrate protein, thus completing the reaction cycle. Several rounds of ATP-dependent interactions between DnaJ, DnaK and GrpE are required for fully efficient folding.</text>
</comment>
<comment type="subunit">
    <text evidence="1">Homodimer.</text>
</comment>
<comment type="subcellular location">
    <subcellularLocation>
        <location evidence="1">Cytoplasm</location>
    </subcellularLocation>
</comment>
<comment type="similarity">
    <text evidence="1">Belongs to the GrpE family.</text>
</comment>
<reference key="1">
    <citation type="journal article" date="2006" name="J. Bacteriol.">
        <title>Comparison of the genome sequence of the poultry pathogen Bordetella avium with those of B. bronchiseptica, B. pertussis, and B. parapertussis reveals extensive diversity in surface structures associated with host interaction.</title>
        <authorList>
            <person name="Sebaihia M."/>
            <person name="Preston A."/>
            <person name="Maskell D.J."/>
            <person name="Kuzmiak H."/>
            <person name="Connell T.D."/>
            <person name="King N.D."/>
            <person name="Orndorff P.E."/>
            <person name="Miyamoto D.M."/>
            <person name="Thomson N.R."/>
            <person name="Harris D."/>
            <person name="Goble A."/>
            <person name="Lord A."/>
            <person name="Murphy L."/>
            <person name="Quail M.A."/>
            <person name="Rutter S."/>
            <person name="Squares R."/>
            <person name="Squares S."/>
            <person name="Woodward J."/>
            <person name="Parkhill J."/>
            <person name="Temple L.M."/>
        </authorList>
    </citation>
    <scope>NUCLEOTIDE SEQUENCE [LARGE SCALE GENOMIC DNA]</scope>
    <source>
        <strain>197N</strain>
    </source>
</reference>